<name>S46_DROME</name>
<proteinExistence type="evidence at transcript level"/>
<comment type="function">
    <text evidence="3 5">Putative proton-coupled transporter that delivers pathogen-associated molecular patterns to cytosolic pattern recognition receptors as part of the innate immune response to microbes. Likely transports anhydro-muropeptides that contain the amino acid diaminopimelic acid (DAP-type peptidoglycan muropeptides) such as tracheal toxin (TCT), common in Gram-negative bacteria. May transport TCT across the phagosome membrane for cytosolic recognition by PGRP-LE, triggering the activation of imd/Relish pathway and production of antimicrobial peptides (PubMed:28539433). The transport mechanism, its electrogenicity and stoichiometry remain to be elucidated (Probable).</text>
</comment>
<comment type="catalytic activity">
    <reaction evidence="6">
        <text>N-acetyl-beta-D-glucosaminyl-(1-&gt;4)-1,6-anhydro-N-acetyl-beta-D-muramoyl-L-alanyl-gamma-D-glutamyl-meso-2,6-diaminopimeloyl-D-alanine(out) + n H(+)(out) = N-acetyl-beta-D-glucosaminyl-(1-&gt;4)-1,6-anhydro-N-acetyl-beta-D-muramoyl-L-alanyl-gamma-D-glutamyl-meso-2,6-diaminopimeloyl-D-alanine(in) + n H(+)(in)</text>
        <dbReference type="Rhea" id="RHEA:76355"/>
        <dbReference type="ChEBI" id="CHEBI:15378"/>
        <dbReference type="ChEBI" id="CHEBI:195208"/>
    </reaction>
    <physiologicalReaction direction="left-to-right" evidence="6">
        <dbReference type="Rhea" id="RHEA:76356"/>
    </physiologicalReaction>
</comment>
<comment type="subcellular location">
    <subcellularLocation>
        <location evidence="6">Cytoplasmic vesicle</location>
        <location evidence="6">Phagosome membrane</location>
        <topology evidence="1">Multi-pass membrane protein</topology>
    </subcellularLocation>
</comment>
<comment type="alternative products">
    <event type="alternative initiation"/>
    <isoform>
        <id>A1Z7R6-1</id>
        <name>1</name>
        <name>CG8046-RA</name>
        <sequence type="displayed"/>
    </isoform>
    <isoform>
        <id>A1Z7R6-2</id>
        <name>2</name>
        <name>CG8046-RB</name>
        <sequence type="described" ref="VSP_061964"/>
    </isoform>
</comment>
<comment type="tissue specificity">
    <text evidence="3">Expressed in Malpighian tubules.</text>
</comment>
<comment type="induction">
    <text evidence="3">Up-regulated upon E.coli infection.</text>
</comment>
<comment type="similarity">
    <text evidence="5">Belongs to the major facilitator superfamily. SLC46 family.</text>
</comment>
<evidence type="ECO:0000255" key="1"/>
<evidence type="ECO:0000256" key="2">
    <source>
        <dbReference type="SAM" id="MobiDB-lite"/>
    </source>
</evidence>
<evidence type="ECO:0000269" key="3">
    <source>
    </source>
</evidence>
<evidence type="ECO:0000303" key="4">
    <source>
    </source>
</evidence>
<evidence type="ECO:0000305" key="5"/>
<evidence type="ECO:0000305" key="6">
    <source>
    </source>
</evidence>
<dbReference type="EMBL" id="AE013599">
    <property type="protein sequence ID" value="AAF58974.3"/>
    <property type="molecule type" value="Genomic_DNA"/>
</dbReference>
<dbReference type="EMBL" id="AE013599">
    <property type="protein sequence ID" value="AAM68815.2"/>
    <property type="molecule type" value="Genomic_DNA"/>
</dbReference>
<dbReference type="EMBL" id="BT150192">
    <property type="protein sequence ID" value="AGR67529.1"/>
    <property type="molecule type" value="mRNA"/>
</dbReference>
<dbReference type="RefSeq" id="NP_610465.2">
    <molecule id="A1Z7R6-2"/>
    <property type="nucleotide sequence ID" value="NM_136621.4"/>
</dbReference>
<dbReference type="RefSeq" id="NP_724761.1">
    <molecule id="A1Z7R6-1"/>
    <property type="nucleotide sequence ID" value="NM_165657.3"/>
</dbReference>
<dbReference type="SMR" id="A1Z7R6"/>
<dbReference type="FunCoup" id="A1Z7R6">
    <property type="interactions" value="45"/>
</dbReference>
<dbReference type="STRING" id="7227.FBpp0087701"/>
<dbReference type="PaxDb" id="7227-FBpp0087701"/>
<dbReference type="DNASU" id="35936"/>
<dbReference type="EnsemblMetazoa" id="FBtr0088620">
    <molecule id="A1Z7R6-1"/>
    <property type="protein sequence ID" value="FBpp0087701"/>
    <property type="gene ID" value="FBgn0033388"/>
</dbReference>
<dbReference type="EnsemblMetazoa" id="FBtr0088621">
    <molecule id="A1Z7R6-2"/>
    <property type="protein sequence ID" value="FBpp0087702"/>
    <property type="gene ID" value="FBgn0033388"/>
</dbReference>
<dbReference type="GeneID" id="35936"/>
<dbReference type="KEGG" id="dme:Dmel_CG8046"/>
<dbReference type="UCSC" id="CG8046-RA">
    <molecule id="A1Z7R6-1"/>
    <property type="organism name" value="d. melanogaster"/>
</dbReference>
<dbReference type="AGR" id="FB:FBgn0033388"/>
<dbReference type="FlyBase" id="FBgn0033388">
    <property type="gene designation" value="CG8046"/>
</dbReference>
<dbReference type="VEuPathDB" id="VectorBase:FBgn0033388"/>
<dbReference type="eggNOG" id="KOG2816">
    <property type="taxonomic scope" value="Eukaryota"/>
</dbReference>
<dbReference type="GeneTree" id="ENSGT00950000183096"/>
<dbReference type="HOGENOM" id="CLU_028365_4_1_1"/>
<dbReference type="InParanoid" id="A1Z7R6"/>
<dbReference type="OMA" id="FAFVDWQ"/>
<dbReference type="OrthoDB" id="430300at2759"/>
<dbReference type="PhylomeDB" id="A1Z7R6"/>
<dbReference type="Reactome" id="R-DME-196757">
    <property type="pathway name" value="Metabolism of folate and pterines"/>
</dbReference>
<dbReference type="Reactome" id="R-DME-917937">
    <property type="pathway name" value="Iron uptake and transport"/>
</dbReference>
<dbReference type="Reactome" id="R-DME-9707616">
    <property type="pathway name" value="Heme signaling"/>
</dbReference>
<dbReference type="BioGRID-ORCS" id="35936">
    <property type="hits" value="0 hits in 3 CRISPR screens"/>
</dbReference>
<dbReference type="GenomeRNAi" id="35936"/>
<dbReference type="PRO" id="PR:A1Z7R6"/>
<dbReference type="Proteomes" id="UP000000803">
    <property type="component" value="Chromosome 2R"/>
</dbReference>
<dbReference type="Bgee" id="FBgn0033388">
    <property type="expression patterns" value="Expressed in embryonic/larval hemocyte (Drosophila) and 21 other cell types or tissues"/>
</dbReference>
<dbReference type="ExpressionAtlas" id="A1Z7R6">
    <property type="expression patterns" value="baseline and differential"/>
</dbReference>
<dbReference type="GO" id="GO:0016020">
    <property type="term" value="C:membrane"/>
    <property type="evidence" value="ECO:0000318"/>
    <property type="project" value="GO_Central"/>
</dbReference>
<dbReference type="GO" id="GO:0030670">
    <property type="term" value="C:phagocytic vesicle membrane"/>
    <property type="evidence" value="ECO:0007669"/>
    <property type="project" value="UniProtKB-SubCell"/>
</dbReference>
<dbReference type="GO" id="GO:0015647">
    <property type="term" value="F:peptidoglycan transmembrane transporter activity"/>
    <property type="evidence" value="ECO:0000315"/>
    <property type="project" value="FlyBase"/>
</dbReference>
<dbReference type="GO" id="GO:0022857">
    <property type="term" value="F:transmembrane transporter activity"/>
    <property type="evidence" value="ECO:0000318"/>
    <property type="project" value="GO_Central"/>
</dbReference>
<dbReference type="GO" id="GO:0045087">
    <property type="term" value="P:innate immune response"/>
    <property type="evidence" value="ECO:0007669"/>
    <property type="project" value="UniProtKB-KW"/>
</dbReference>
<dbReference type="GO" id="GO:0015835">
    <property type="term" value="P:peptidoglycan transport"/>
    <property type="evidence" value="ECO:0000315"/>
    <property type="project" value="FlyBase"/>
</dbReference>
<dbReference type="GO" id="GO:0002760">
    <property type="term" value="P:positive regulation of antimicrobial humoral response"/>
    <property type="evidence" value="ECO:0000315"/>
    <property type="project" value="FlyBase"/>
</dbReference>
<dbReference type="GO" id="GO:0061059">
    <property type="term" value="P:positive regulation of peptidoglycan recognition protein signaling pathway"/>
    <property type="evidence" value="ECO:0000315"/>
    <property type="project" value="FlyBase"/>
</dbReference>
<dbReference type="GO" id="GO:0055085">
    <property type="term" value="P:transmembrane transport"/>
    <property type="evidence" value="ECO:0000318"/>
    <property type="project" value="GO_Central"/>
</dbReference>
<dbReference type="CDD" id="cd17386">
    <property type="entry name" value="MFS_SLC46"/>
    <property type="match status" value="1"/>
</dbReference>
<dbReference type="Gene3D" id="1.20.1250.20">
    <property type="entry name" value="MFS general substrate transporter like domains"/>
    <property type="match status" value="1"/>
</dbReference>
<dbReference type="InterPro" id="IPR011701">
    <property type="entry name" value="MFS"/>
</dbReference>
<dbReference type="InterPro" id="IPR036259">
    <property type="entry name" value="MFS_trans_sf"/>
</dbReference>
<dbReference type="PANTHER" id="PTHR23507:SF39">
    <property type="entry name" value="GH23453P-RELATED"/>
    <property type="match status" value="1"/>
</dbReference>
<dbReference type="PANTHER" id="PTHR23507">
    <property type="entry name" value="ZGC:174356"/>
    <property type="match status" value="1"/>
</dbReference>
<dbReference type="Pfam" id="PF07690">
    <property type="entry name" value="MFS_1"/>
    <property type="match status" value="1"/>
</dbReference>
<dbReference type="SUPFAM" id="SSF103473">
    <property type="entry name" value="MFS general substrate transporter"/>
    <property type="match status" value="1"/>
</dbReference>
<dbReference type="PROSITE" id="PS00978">
    <property type="entry name" value="FAD_G3PDH_2"/>
    <property type="match status" value="1"/>
</dbReference>
<reference key="1">
    <citation type="journal article" date="2000" name="Science">
        <title>The genome sequence of Drosophila melanogaster.</title>
        <authorList>
            <person name="Adams M.D."/>
            <person name="Celniker S.E."/>
            <person name="Holt R.A."/>
            <person name="Evans C.A."/>
            <person name="Gocayne J.D."/>
            <person name="Amanatides P.G."/>
            <person name="Scherer S.E."/>
            <person name="Li P.W."/>
            <person name="Hoskins R.A."/>
            <person name="Galle R.F."/>
            <person name="George R.A."/>
            <person name="Lewis S.E."/>
            <person name="Richards S."/>
            <person name="Ashburner M."/>
            <person name="Henderson S.N."/>
            <person name="Sutton G.G."/>
            <person name="Wortman J.R."/>
            <person name="Yandell M.D."/>
            <person name="Zhang Q."/>
            <person name="Chen L.X."/>
            <person name="Brandon R.C."/>
            <person name="Rogers Y.-H.C."/>
            <person name="Blazej R.G."/>
            <person name="Champe M."/>
            <person name="Pfeiffer B.D."/>
            <person name="Wan K.H."/>
            <person name="Doyle C."/>
            <person name="Baxter E.G."/>
            <person name="Helt G."/>
            <person name="Nelson C.R."/>
            <person name="Miklos G.L.G."/>
            <person name="Abril J.F."/>
            <person name="Agbayani A."/>
            <person name="An H.-J."/>
            <person name="Andrews-Pfannkoch C."/>
            <person name="Baldwin D."/>
            <person name="Ballew R.M."/>
            <person name="Basu A."/>
            <person name="Baxendale J."/>
            <person name="Bayraktaroglu L."/>
            <person name="Beasley E.M."/>
            <person name="Beeson K.Y."/>
            <person name="Benos P.V."/>
            <person name="Berman B.P."/>
            <person name="Bhandari D."/>
            <person name="Bolshakov S."/>
            <person name="Borkova D."/>
            <person name="Botchan M.R."/>
            <person name="Bouck J."/>
            <person name="Brokstein P."/>
            <person name="Brottier P."/>
            <person name="Burtis K.C."/>
            <person name="Busam D.A."/>
            <person name="Butler H."/>
            <person name="Cadieu E."/>
            <person name="Center A."/>
            <person name="Chandra I."/>
            <person name="Cherry J.M."/>
            <person name="Cawley S."/>
            <person name="Dahlke C."/>
            <person name="Davenport L.B."/>
            <person name="Davies P."/>
            <person name="de Pablos B."/>
            <person name="Delcher A."/>
            <person name="Deng Z."/>
            <person name="Mays A.D."/>
            <person name="Dew I."/>
            <person name="Dietz S.M."/>
            <person name="Dodson K."/>
            <person name="Doup L.E."/>
            <person name="Downes M."/>
            <person name="Dugan-Rocha S."/>
            <person name="Dunkov B.C."/>
            <person name="Dunn P."/>
            <person name="Durbin K.J."/>
            <person name="Evangelista C.C."/>
            <person name="Ferraz C."/>
            <person name="Ferriera S."/>
            <person name="Fleischmann W."/>
            <person name="Fosler C."/>
            <person name="Gabrielian A.E."/>
            <person name="Garg N.S."/>
            <person name="Gelbart W.M."/>
            <person name="Glasser K."/>
            <person name="Glodek A."/>
            <person name="Gong F."/>
            <person name="Gorrell J.H."/>
            <person name="Gu Z."/>
            <person name="Guan P."/>
            <person name="Harris M."/>
            <person name="Harris N.L."/>
            <person name="Harvey D.A."/>
            <person name="Heiman T.J."/>
            <person name="Hernandez J.R."/>
            <person name="Houck J."/>
            <person name="Hostin D."/>
            <person name="Houston K.A."/>
            <person name="Howland T.J."/>
            <person name="Wei M.-H."/>
            <person name="Ibegwam C."/>
            <person name="Jalali M."/>
            <person name="Kalush F."/>
            <person name="Karpen G.H."/>
            <person name="Ke Z."/>
            <person name="Kennison J.A."/>
            <person name="Ketchum K.A."/>
            <person name="Kimmel B.E."/>
            <person name="Kodira C.D."/>
            <person name="Kraft C.L."/>
            <person name="Kravitz S."/>
            <person name="Kulp D."/>
            <person name="Lai Z."/>
            <person name="Lasko P."/>
            <person name="Lei Y."/>
            <person name="Levitsky A.A."/>
            <person name="Li J.H."/>
            <person name="Li Z."/>
            <person name="Liang Y."/>
            <person name="Lin X."/>
            <person name="Liu X."/>
            <person name="Mattei B."/>
            <person name="McIntosh T.C."/>
            <person name="McLeod M.P."/>
            <person name="McPherson D."/>
            <person name="Merkulov G."/>
            <person name="Milshina N.V."/>
            <person name="Mobarry C."/>
            <person name="Morris J."/>
            <person name="Moshrefi A."/>
            <person name="Mount S.M."/>
            <person name="Moy M."/>
            <person name="Murphy B."/>
            <person name="Murphy L."/>
            <person name="Muzny D.M."/>
            <person name="Nelson D.L."/>
            <person name="Nelson D.R."/>
            <person name="Nelson K.A."/>
            <person name="Nixon K."/>
            <person name="Nusskern D.R."/>
            <person name="Pacleb J.M."/>
            <person name="Palazzolo M."/>
            <person name="Pittman G.S."/>
            <person name="Pan S."/>
            <person name="Pollard J."/>
            <person name="Puri V."/>
            <person name="Reese M.G."/>
            <person name="Reinert K."/>
            <person name="Remington K."/>
            <person name="Saunders R.D.C."/>
            <person name="Scheeler F."/>
            <person name="Shen H."/>
            <person name="Shue B.C."/>
            <person name="Siden-Kiamos I."/>
            <person name="Simpson M."/>
            <person name="Skupski M.P."/>
            <person name="Smith T.J."/>
            <person name="Spier E."/>
            <person name="Spradling A.C."/>
            <person name="Stapleton M."/>
            <person name="Strong R."/>
            <person name="Sun E."/>
            <person name="Svirskas R."/>
            <person name="Tector C."/>
            <person name="Turner R."/>
            <person name="Venter E."/>
            <person name="Wang A.H."/>
            <person name="Wang X."/>
            <person name="Wang Z.-Y."/>
            <person name="Wassarman D.A."/>
            <person name="Weinstock G.M."/>
            <person name="Weissenbach J."/>
            <person name="Williams S.M."/>
            <person name="Woodage T."/>
            <person name="Worley K.C."/>
            <person name="Wu D."/>
            <person name="Yang S."/>
            <person name="Yao Q.A."/>
            <person name="Ye J."/>
            <person name="Yeh R.-F."/>
            <person name="Zaveri J.S."/>
            <person name="Zhan M."/>
            <person name="Zhang G."/>
            <person name="Zhao Q."/>
            <person name="Zheng L."/>
            <person name="Zheng X.H."/>
            <person name="Zhong F.N."/>
            <person name="Zhong W."/>
            <person name="Zhou X."/>
            <person name="Zhu S.C."/>
            <person name="Zhu X."/>
            <person name="Smith H.O."/>
            <person name="Gibbs R.A."/>
            <person name="Myers E.W."/>
            <person name="Rubin G.M."/>
            <person name="Venter J.C."/>
        </authorList>
    </citation>
    <scope>NUCLEOTIDE SEQUENCE [LARGE SCALE GENOMIC DNA] (ISOFORMS 1 AND 2)</scope>
    <source>
        <strain>Berkeley</strain>
    </source>
</reference>
<reference key="2">
    <citation type="journal article" date="2002" name="Genome Biol.">
        <title>Annotation of the Drosophila melanogaster euchromatic genome: a systematic review.</title>
        <authorList>
            <person name="Misra S."/>
            <person name="Crosby M.A."/>
            <person name="Mungall C.J."/>
            <person name="Matthews B.B."/>
            <person name="Campbell K.S."/>
            <person name="Hradecky P."/>
            <person name="Huang Y."/>
            <person name="Kaminker J.S."/>
            <person name="Millburn G.H."/>
            <person name="Prochnik S.E."/>
            <person name="Smith C.D."/>
            <person name="Tupy J.L."/>
            <person name="Whitfield E.J."/>
            <person name="Bayraktaroglu L."/>
            <person name="Berman B.P."/>
            <person name="Bettencourt B.R."/>
            <person name="Celniker S.E."/>
            <person name="de Grey A.D.N.J."/>
            <person name="Drysdale R.A."/>
            <person name="Harris N.L."/>
            <person name="Richter J."/>
            <person name="Russo S."/>
            <person name="Schroeder A.J."/>
            <person name="Shu S.Q."/>
            <person name="Stapleton M."/>
            <person name="Yamada C."/>
            <person name="Ashburner M."/>
            <person name="Gelbart W.M."/>
            <person name="Rubin G.M."/>
            <person name="Lewis S.E."/>
        </authorList>
    </citation>
    <scope>GENOME REANNOTATION</scope>
    <source>
        <strain>Berkeley</strain>
    </source>
</reference>
<reference key="3">
    <citation type="submission" date="2013-07" db="EMBL/GenBank/DDBJ databases">
        <authorList>
            <person name="Carlson J."/>
            <person name="Booth B."/>
            <person name="Frise E."/>
            <person name="Park S."/>
            <person name="Wan K."/>
            <person name="Yu C."/>
            <person name="Celniker S."/>
        </authorList>
    </citation>
    <scope>NUCLEOTIDE SEQUENCE [MRNA] (ISOFORM 2)</scope>
</reference>
<reference key="4">
    <citation type="journal article" date="2017" name="J. Immunol.">
        <title>SLC46 Family Transporters Facilitate Cytosolic Innate Immune Recognition of Monomeric Peptidoglycans.</title>
        <authorList>
            <person name="Paik D."/>
            <person name="Monahan A."/>
            <person name="Caffrey D.R."/>
            <person name="Elling R."/>
            <person name="Goldman W.E."/>
            <person name="Silverman N."/>
        </authorList>
    </citation>
    <scope>FUNCTION</scope>
    <scope>TRANSPORTER ACTIVITY</scope>
    <scope>SUBCELLULAR LOCATION</scope>
    <scope>TISSUE SPECIFICITY</scope>
    <scope>INDUCTION</scope>
</reference>
<sequence length="519" mass="56997">MNEEPHAHENLVAKAQRSGDADPEVASTASEKQRSSGASAIAVGTEFPGNPQASRPQSLGMYLLEPFILILLFAYNFSSTVLKNEVIYQSCTAGFGYPDSVCQLLGTKNITNETKRIEEQVQPYAAQVTLAMRLVECFIPAFCGLFAGSWADHYGRKPLLMCSFLGYGLQYLISAAIAYCAMYTQGLVSPWWYVLSIVPLSCLGSSVTYSVAAVCFIADVSGGKVRSYRMIAYELAIYVGLLLGSLGSGYAYEATDAYIVFSISAVCIFTALFLMALLLPESLPARNRTLSTPTTDTSVVSMLKSLWSTCSKPREHQNRFMLTTIMVVLLLTAFVSDGSNSVFYKFMRIKFHWTVKQFTEYETVGILVPAVAGSGGVLFIWSLRKCTNSAILWLALVSLLSHCSSSLMKGFALESWQIYVAIGLGVFKSLVNPMCRTMITNLLPADERGKIFALLGVLQALSPLISSTLYVAIYTRTLNTEPGIFNVFSAFLFGIGIILLGTVWHKKSRNLVYYEPVFK</sequence>
<organism>
    <name type="scientific">Drosophila melanogaster</name>
    <name type="common">Fruit fly</name>
    <dbReference type="NCBI Taxonomy" id="7227"/>
    <lineage>
        <taxon>Eukaryota</taxon>
        <taxon>Metazoa</taxon>
        <taxon>Ecdysozoa</taxon>
        <taxon>Arthropoda</taxon>
        <taxon>Hexapoda</taxon>
        <taxon>Insecta</taxon>
        <taxon>Pterygota</taxon>
        <taxon>Neoptera</taxon>
        <taxon>Endopterygota</taxon>
        <taxon>Diptera</taxon>
        <taxon>Brachycera</taxon>
        <taxon>Muscomorpha</taxon>
        <taxon>Ephydroidea</taxon>
        <taxon>Drosophilidae</taxon>
        <taxon>Drosophila</taxon>
        <taxon>Sophophora</taxon>
    </lineage>
</organism>
<protein>
    <recommendedName>
        <fullName evidence="6">Probable peptidoglycan muropeptide transporter SLC46</fullName>
    </recommendedName>
    <alternativeName>
        <fullName>Solute carrier family 46 member</fullName>
    </alternativeName>
</protein>
<feature type="chain" id="PRO_0000458758" description="Probable peptidoglycan muropeptide transporter SLC46">
    <location>
        <begin position="1"/>
        <end position="519"/>
    </location>
</feature>
<feature type="transmembrane region" description="Helical" evidence="1">
    <location>
        <begin position="58"/>
        <end position="78"/>
    </location>
</feature>
<feature type="transmembrane region" description="Helical" evidence="1">
    <location>
        <begin position="128"/>
        <end position="148"/>
    </location>
</feature>
<feature type="transmembrane region" description="Helical" evidence="1">
    <location>
        <begin position="159"/>
        <end position="179"/>
    </location>
</feature>
<feature type="transmembrane region" description="Helical" evidence="1">
    <location>
        <begin position="197"/>
        <end position="217"/>
    </location>
</feature>
<feature type="transmembrane region" description="Helical" evidence="1">
    <location>
        <begin position="230"/>
        <end position="250"/>
    </location>
</feature>
<feature type="transmembrane region" description="Helical" evidence="1">
    <location>
        <begin position="259"/>
        <end position="279"/>
    </location>
</feature>
<feature type="transmembrane region" description="Helical" evidence="1">
    <location>
        <begin position="320"/>
        <end position="340"/>
    </location>
</feature>
<feature type="transmembrane region" description="Helical" evidence="1">
    <location>
        <begin position="363"/>
        <end position="383"/>
    </location>
</feature>
<feature type="transmembrane region" description="Helical" evidence="1">
    <location>
        <begin position="390"/>
        <end position="408"/>
    </location>
</feature>
<feature type="transmembrane region" description="Helical" evidence="1">
    <location>
        <begin position="451"/>
        <end position="471"/>
    </location>
</feature>
<feature type="transmembrane region" description="Helical" evidence="1">
    <location>
        <begin position="484"/>
        <end position="504"/>
    </location>
</feature>
<feature type="region of interest" description="Disordered" evidence="2">
    <location>
        <begin position="1"/>
        <end position="51"/>
    </location>
</feature>
<feature type="compositionally biased region" description="Basic and acidic residues" evidence="2">
    <location>
        <begin position="1"/>
        <end position="11"/>
    </location>
</feature>
<feature type="compositionally biased region" description="Polar residues" evidence="2">
    <location>
        <begin position="27"/>
        <end position="38"/>
    </location>
</feature>
<feature type="splice variant" id="VSP_061964" description="In isoform 2.">
    <location>
        <begin position="1"/>
        <end position="131"/>
    </location>
</feature>
<gene>
    <name type="primary">SLC46</name>
    <name evidence="4" type="synonym">Dmel\CG8046</name>
    <name type="ORF">CG8046</name>
    <name type="ORF">Dmel_CG8046</name>
</gene>
<keyword id="KW-0024">Alternative initiation</keyword>
<keyword id="KW-0968">Cytoplasmic vesicle</keyword>
<keyword id="KW-0391">Immunity</keyword>
<keyword id="KW-0399">Innate immunity</keyword>
<keyword id="KW-0472">Membrane</keyword>
<keyword id="KW-1185">Reference proteome</keyword>
<keyword id="KW-0812">Transmembrane</keyword>
<keyword id="KW-1133">Transmembrane helix</keyword>
<keyword id="KW-0813">Transport</keyword>
<accession>A1Z7R6</accession>
<accession>A1Z7R7</accession>